<name>MDM12_EMENI</name>
<protein>
    <recommendedName>
        <fullName evidence="1">Mitochondrial distribution and morphology protein 12</fullName>
    </recommendedName>
    <alternativeName>
        <fullName evidence="1">Mitochondrial inheritance component MDM12</fullName>
    </alternativeName>
</protein>
<evidence type="ECO:0000255" key="1">
    <source>
        <dbReference type="HAMAP-Rule" id="MF_03104"/>
    </source>
</evidence>
<evidence type="ECO:0000256" key="2">
    <source>
        <dbReference type="SAM" id="MobiDB-lite"/>
    </source>
</evidence>
<evidence type="ECO:0000305" key="3"/>
<comment type="function">
    <text evidence="1">Component of the ERMES/MDM complex, which serves as a molecular tether to connect the endoplasmic reticulum (ER) and mitochondria. Components of this complex are involved in the control of mitochondrial shape and protein biogenesis, and function in nonvesicular lipid trafficking between the ER and mitochondria. Mdm12 is required for the interaction of the ER-resident membrane protein mmm1 and the outer mitochondrial membrane-resident beta-barrel protein mdm10. The mdm12-mmm1 subcomplex functions in the major beta-barrel assembly pathway that is responsible for biogenesis of all mitochondrial outer membrane beta-barrel proteins, and acts in a late step after the SAM complex. The mdm10-mdm12-mmm1 subcomplex further acts in the TOM40-specific pathway after the action of the mdm12-mmm1 complex. Essential for establishing and maintaining the structure of mitochondria and maintenance of mtDNA nucleoids.</text>
</comment>
<comment type="subunit">
    <text evidence="1">Component of the ER-mitochondria encounter structure (ERMES) or MDM complex, composed of mmm1, mdm10, mdm12 and mdm34. A mmm1 homodimer associates with one molecule of mdm12 on each side in a pairwise head-to-tail manner, and the SMP-LTD domains of mmm1 and mdm12 generate a continuous hydrophobic tunnel for phospholipid trafficking.</text>
</comment>
<comment type="subcellular location">
    <subcellularLocation>
        <location evidence="1">Mitochondrion outer membrane</location>
        <topology evidence="1">Peripheral membrane protein</topology>
        <orientation evidence="1">Cytoplasmic side</orientation>
    </subcellularLocation>
    <subcellularLocation>
        <location evidence="1">Endoplasmic reticulum membrane</location>
        <topology evidence="1">Peripheral membrane protein</topology>
        <orientation evidence="1">Cytoplasmic side</orientation>
    </subcellularLocation>
    <text evidence="1">The ERMES/MDM complex localizes to a few discrete foci (around 10 per single cell), that represent mitochondria-endoplasmic reticulum junctions. These foci are often found next to mtDNA nucleoids.</text>
</comment>
<comment type="domain">
    <text evidence="1">The SMP-LTD domain is a barrel-like domain that can bind various types of glycerophospholipids in its interior and mediate their transfer between two adjacent bilayers.</text>
</comment>
<comment type="similarity">
    <text evidence="1">Belongs to the MDM12 family.</text>
</comment>
<comment type="sequence caution" evidence="3">
    <conflict type="erroneous gene model prediction">
        <sequence resource="EMBL-CDS" id="EAA65651"/>
    </conflict>
</comment>
<gene>
    <name evidence="1" type="primary">mdm12</name>
    <name type="ORF">AN0821</name>
</gene>
<sequence length="436" mass="47876">MSIEVNWGTATSGPDGEALAERIRSFIHDKFQQVPLPRFIRSVQVHSFDFGTVAPDLEIKDFCEPFADFYEDDEDGDSGSEISEELQHRTHDNPWDRTQSELNETSFRDDRPVTSHHALRDPFDEDFRQHTSSPLRSPIALGDHLNPHFLPRAGTPGIPGGTSTLGYHLMSLGGLSGTQTPLAAVAGGSPFTTNWTDPSPMGQGNKTGIRPSPLHRADADIDSSNPASRPSTASTHPSGSNRSSHPDGHPEHNDDPISSSENPLLQNQPPPRMRERRPEDFQILCHVKYAGDIRLSLTAEILLDYPMPSFVGLPLKLNVTGITFDGVAVIAYIRKRVHFCFLSPEDAEALVGSGSYSGQQETPGPSTGSSGGGNPSPHQKGLSLLQEIRVESEIGRKEDGKQVLKNVGKVERFVLAQVRRIFDEELVFPSFYTFLI</sequence>
<keyword id="KW-0256">Endoplasmic reticulum</keyword>
<keyword id="KW-0445">Lipid transport</keyword>
<keyword id="KW-0446">Lipid-binding</keyword>
<keyword id="KW-0472">Membrane</keyword>
<keyword id="KW-0496">Mitochondrion</keyword>
<keyword id="KW-1000">Mitochondrion outer membrane</keyword>
<keyword id="KW-1185">Reference proteome</keyword>
<keyword id="KW-0813">Transport</keyword>
<proteinExistence type="inferred from homology"/>
<reference key="1">
    <citation type="journal article" date="2005" name="Nature">
        <title>Sequencing of Aspergillus nidulans and comparative analysis with A. fumigatus and A. oryzae.</title>
        <authorList>
            <person name="Galagan J.E."/>
            <person name="Calvo S.E."/>
            <person name="Cuomo C."/>
            <person name="Ma L.-J."/>
            <person name="Wortman J.R."/>
            <person name="Batzoglou S."/>
            <person name="Lee S.-I."/>
            <person name="Bastuerkmen M."/>
            <person name="Spevak C.C."/>
            <person name="Clutterbuck J."/>
            <person name="Kapitonov V."/>
            <person name="Jurka J."/>
            <person name="Scazzocchio C."/>
            <person name="Farman M.L."/>
            <person name="Butler J."/>
            <person name="Purcell S."/>
            <person name="Harris S."/>
            <person name="Braus G.H."/>
            <person name="Draht O."/>
            <person name="Busch S."/>
            <person name="D'Enfert C."/>
            <person name="Bouchier C."/>
            <person name="Goldman G.H."/>
            <person name="Bell-Pedersen D."/>
            <person name="Griffiths-Jones S."/>
            <person name="Doonan J.H."/>
            <person name="Yu J."/>
            <person name="Vienken K."/>
            <person name="Pain A."/>
            <person name="Freitag M."/>
            <person name="Selker E.U."/>
            <person name="Archer D.B."/>
            <person name="Penalva M.A."/>
            <person name="Oakley B.R."/>
            <person name="Momany M."/>
            <person name="Tanaka T."/>
            <person name="Kumagai T."/>
            <person name="Asai K."/>
            <person name="Machida M."/>
            <person name="Nierman W.C."/>
            <person name="Denning D.W."/>
            <person name="Caddick M.X."/>
            <person name="Hynes M."/>
            <person name="Paoletti M."/>
            <person name="Fischer R."/>
            <person name="Miller B.L."/>
            <person name="Dyer P.S."/>
            <person name="Sachs M.S."/>
            <person name="Osmani S.A."/>
            <person name="Birren B.W."/>
        </authorList>
    </citation>
    <scope>NUCLEOTIDE SEQUENCE [LARGE SCALE GENOMIC DNA]</scope>
    <source>
        <strain>FGSC A4 / ATCC 38163 / CBS 112.46 / NRRL 194 / M139</strain>
    </source>
</reference>
<reference key="2">
    <citation type="journal article" date="2009" name="Fungal Genet. Biol.">
        <title>The 2008 update of the Aspergillus nidulans genome annotation: a community effort.</title>
        <authorList>
            <person name="Wortman J.R."/>
            <person name="Gilsenan J.M."/>
            <person name="Joardar V."/>
            <person name="Deegan J."/>
            <person name="Clutterbuck J."/>
            <person name="Andersen M.R."/>
            <person name="Archer D."/>
            <person name="Bencina M."/>
            <person name="Braus G."/>
            <person name="Coutinho P."/>
            <person name="von Dohren H."/>
            <person name="Doonan J."/>
            <person name="Driessen A.J."/>
            <person name="Durek P."/>
            <person name="Espeso E."/>
            <person name="Fekete E."/>
            <person name="Flipphi M."/>
            <person name="Estrada C.G."/>
            <person name="Geysens S."/>
            <person name="Goldman G."/>
            <person name="de Groot P.W."/>
            <person name="Hansen K."/>
            <person name="Harris S.D."/>
            <person name="Heinekamp T."/>
            <person name="Helmstaedt K."/>
            <person name="Henrissat B."/>
            <person name="Hofmann G."/>
            <person name="Homan T."/>
            <person name="Horio T."/>
            <person name="Horiuchi H."/>
            <person name="James S."/>
            <person name="Jones M."/>
            <person name="Karaffa L."/>
            <person name="Karanyi Z."/>
            <person name="Kato M."/>
            <person name="Keller N."/>
            <person name="Kelly D.E."/>
            <person name="Kiel J.A."/>
            <person name="Kim J.M."/>
            <person name="van der Klei I.J."/>
            <person name="Klis F.M."/>
            <person name="Kovalchuk A."/>
            <person name="Krasevec N."/>
            <person name="Kubicek C.P."/>
            <person name="Liu B."/>
            <person name="Maccabe A."/>
            <person name="Meyer V."/>
            <person name="Mirabito P."/>
            <person name="Miskei M."/>
            <person name="Mos M."/>
            <person name="Mullins J."/>
            <person name="Nelson D.R."/>
            <person name="Nielsen J."/>
            <person name="Oakley B.R."/>
            <person name="Osmani S.A."/>
            <person name="Pakula T."/>
            <person name="Paszewski A."/>
            <person name="Paulsen I."/>
            <person name="Pilsyk S."/>
            <person name="Pocsi I."/>
            <person name="Punt P.J."/>
            <person name="Ram A.F."/>
            <person name="Ren Q."/>
            <person name="Robellet X."/>
            <person name="Robson G."/>
            <person name="Seiboth B."/>
            <person name="van Solingen P."/>
            <person name="Specht T."/>
            <person name="Sun J."/>
            <person name="Taheri-Talesh N."/>
            <person name="Takeshita N."/>
            <person name="Ussery D."/>
            <person name="vanKuyk P.A."/>
            <person name="Visser H."/>
            <person name="van de Vondervoort P.J."/>
            <person name="de Vries R.P."/>
            <person name="Walton J."/>
            <person name="Xiang X."/>
            <person name="Xiong Y."/>
            <person name="Zeng A.P."/>
            <person name="Brandt B.W."/>
            <person name="Cornell M.J."/>
            <person name="van den Hondel C.A."/>
            <person name="Visser J."/>
            <person name="Oliver S.G."/>
            <person name="Turner G."/>
        </authorList>
    </citation>
    <scope>GENOME REANNOTATION</scope>
    <source>
        <strain>FGSC A4 / ATCC 38163 / CBS 112.46 / NRRL 194 / M139</strain>
    </source>
</reference>
<accession>Q5BF59</accession>
<accession>C8VQF4</accession>
<dbReference type="EMBL" id="AACD01000013">
    <property type="protein sequence ID" value="EAA65651.1"/>
    <property type="status" value="ALT_SEQ"/>
    <property type="molecule type" value="Genomic_DNA"/>
</dbReference>
<dbReference type="EMBL" id="BN001308">
    <property type="protein sequence ID" value="CBF88718.1"/>
    <property type="molecule type" value="Genomic_DNA"/>
</dbReference>
<dbReference type="RefSeq" id="XP_658425.1">
    <property type="nucleotide sequence ID" value="XM_653333.1"/>
</dbReference>
<dbReference type="SMR" id="Q5BF59"/>
<dbReference type="STRING" id="227321.Q5BF59"/>
<dbReference type="EnsemblFungi" id="CBF88718">
    <property type="protein sequence ID" value="CBF88718"/>
    <property type="gene ID" value="ANIA_00821"/>
</dbReference>
<dbReference type="KEGG" id="ani:ANIA_00821"/>
<dbReference type="VEuPathDB" id="FungiDB:AN0821"/>
<dbReference type="eggNOG" id="ENOG502S3PB">
    <property type="taxonomic scope" value="Eukaryota"/>
</dbReference>
<dbReference type="HOGENOM" id="CLU_026794_0_0_1"/>
<dbReference type="InParanoid" id="Q5BF59"/>
<dbReference type="OMA" id="KRAHFCF"/>
<dbReference type="OrthoDB" id="3356905at2759"/>
<dbReference type="Proteomes" id="UP000000560">
    <property type="component" value="Chromosome VIII"/>
</dbReference>
<dbReference type="GO" id="GO:0005789">
    <property type="term" value="C:endoplasmic reticulum membrane"/>
    <property type="evidence" value="ECO:0007669"/>
    <property type="project" value="UniProtKB-SubCell"/>
</dbReference>
<dbReference type="GO" id="GO:0032865">
    <property type="term" value="C:ERMES complex"/>
    <property type="evidence" value="ECO:0000318"/>
    <property type="project" value="GO_Central"/>
</dbReference>
<dbReference type="GO" id="GO:0008289">
    <property type="term" value="F:lipid binding"/>
    <property type="evidence" value="ECO:0007669"/>
    <property type="project" value="UniProtKB-KW"/>
</dbReference>
<dbReference type="GO" id="GO:0000002">
    <property type="term" value="P:mitochondrial genome maintenance"/>
    <property type="evidence" value="ECO:0007669"/>
    <property type="project" value="UniProtKB-UniRule"/>
</dbReference>
<dbReference type="GO" id="GO:1990456">
    <property type="term" value="P:mitochondrion-endoplasmic reticulum membrane tethering"/>
    <property type="evidence" value="ECO:0000318"/>
    <property type="project" value="GO_Central"/>
</dbReference>
<dbReference type="GO" id="GO:0015914">
    <property type="term" value="P:phospholipid transport"/>
    <property type="evidence" value="ECO:0000318"/>
    <property type="project" value="GO_Central"/>
</dbReference>
<dbReference type="GO" id="GO:0045040">
    <property type="term" value="P:protein insertion into mitochondrial outer membrane"/>
    <property type="evidence" value="ECO:0007669"/>
    <property type="project" value="UniProtKB-UniRule"/>
</dbReference>
<dbReference type="CDD" id="cd21672">
    <property type="entry name" value="SMP_Mdm12"/>
    <property type="match status" value="1"/>
</dbReference>
<dbReference type="HAMAP" id="MF_03104">
    <property type="entry name" value="Mdm12"/>
    <property type="match status" value="1"/>
</dbReference>
<dbReference type="InterPro" id="IPR027532">
    <property type="entry name" value="Mdm12"/>
</dbReference>
<dbReference type="InterPro" id="IPR019411">
    <property type="entry name" value="MMM1_dom"/>
</dbReference>
<dbReference type="InterPro" id="IPR031468">
    <property type="entry name" value="SMP_LBD"/>
</dbReference>
<dbReference type="PANTHER" id="PTHR28204">
    <property type="entry name" value="MITOCHONDRIAL DISTRIBUTION AND MORPHOLOGY PROTEIN 12"/>
    <property type="match status" value="1"/>
</dbReference>
<dbReference type="PANTHER" id="PTHR28204:SF1">
    <property type="entry name" value="MITOCHONDRIAL DISTRIBUTION AND MORPHOLOGY PROTEIN 12"/>
    <property type="match status" value="1"/>
</dbReference>
<dbReference type="Pfam" id="PF10296">
    <property type="entry name" value="MMM1"/>
    <property type="match status" value="1"/>
</dbReference>
<dbReference type="PROSITE" id="PS51847">
    <property type="entry name" value="SMP"/>
    <property type="match status" value="1"/>
</dbReference>
<feature type="chain" id="PRO_0000384287" description="Mitochondrial distribution and morphology protein 12">
    <location>
        <begin position="1"/>
        <end position="436"/>
    </location>
</feature>
<feature type="domain" description="SMP-LTD" evidence="1">
    <location>
        <begin position="1"/>
        <end position="436"/>
    </location>
</feature>
<feature type="region of interest" description="Disordered" evidence="2">
    <location>
        <begin position="73"/>
        <end position="98"/>
    </location>
</feature>
<feature type="region of interest" description="Disordered" evidence="2">
    <location>
        <begin position="184"/>
        <end position="275"/>
    </location>
</feature>
<feature type="region of interest" description="Disordered" evidence="2">
    <location>
        <begin position="352"/>
        <end position="380"/>
    </location>
</feature>
<feature type="compositionally biased region" description="Acidic residues" evidence="2">
    <location>
        <begin position="73"/>
        <end position="84"/>
    </location>
</feature>
<feature type="compositionally biased region" description="Basic and acidic residues" evidence="2">
    <location>
        <begin position="85"/>
        <end position="98"/>
    </location>
</feature>
<feature type="compositionally biased region" description="Polar residues" evidence="2">
    <location>
        <begin position="190"/>
        <end position="206"/>
    </location>
</feature>
<feature type="compositionally biased region" description="Polar residues" evidence="2">
    <location>
        <begin position="222"/>
        <end position="243"/>
    </location>
</feature>
<feature type="compositionally biased region" description="Basic and acidic residues" evidence="2">
    <location>
        <begin position="244"/>
        <end position="255"/>
    </location>
</feature>
<feature type="compositionally biased region" description="Polar residues" evidence="2">
    <location>
        <begin position="256"/>
        <end position="267"/>
    </location>
</feature>
<organism>
    <name type="scientific">Emericella nidulans (strain FGSC A4 / ATCC 38163 / CBS 112.46 / NRRL 194 / M139)</name>
    <name type="common">Aspergillus nidulans</name>
    <dbReference type="NCBI Taxonomy" id="227321"/>
    <lineage>
        <taxon>Eukaryota</taxon>
        <taxon>Fungi</taxon>
        <taxon>Dikarya</taxon>
        <taxon>Ascomycota</taxon>
        <taxon>Pezizomycotina</taxon>
        <taxon>Eurotiomycetes</taxon>
        <taxon>Eurotiomycetidae</taxon>
        <taxon>Eurotiales</taxon>
        <taxon>Aspergillaceae</taxon>
        <taxon>Aspergillus</taxon>
        <taxon>Aspergillus subgen. Nidulantes</taxon>
    </lineage>
</organism>